<sequence length="182" mass="19536">MARLLWLLRGLTLGTAPRRAVRGQAGGGGPGTGPGLGEAGSLATCELPLAKSEWQKKLTPEQFYVTREKGTEPPFSGIYLNNKEAGMYHCVCCDSPLFSSEKKYCSGTGWPSFSEAHGTSGSDESHTGILRRLDTSLGSARTEVVCKQCEAHLGHVFPDGPGPNGQRFCINSVALKFKPRKH</sequence>
<feature type="transit peptide" description="Mitochondrion" evidence="3">
    <location>
        <begin position="1"/>
        <end position="20"/>
    </location>
</feature>
<feature type="chain" id="PRO_0000140324" description="Methionine-R-sulfoxide reductase B2, mitochondrial">
    <location>
        <begin position="21"/>
        <end position="182"/>
    </location>
</feature>
<feature type="domain" description="MsrB" evidence="4">
    <location>
        <begin position="51"/>
        <end position="180"/>
    </location>
</feature>
<feature type="active site" description="Nucleophile" evidence="4">
    <location>
        <position position="169"/>
    </location>
</feature>
<feature type="binding site" evidence="4">
    <location>
        <position position="90"/>
    </location>
    <ligand>
        <name>Zn(2+)</name>
        <dbReference type="ChEBI" id="CHEBI:29105"/>
    </ligand>
</feature>
<feature type="binding site" evidence="4">
    <location>
        <position position="93"/>
    </location>
    <ligand>
        <name>Zn(2+)</name>
        <dbReference type="ChEBI" id="CHEBI:29105"/>
    </ligand>
</feature>
<feature type="binding site" evidence="4">
    <location>
        <position position="146"/>
    </location>
    <ligand>
        <name>Zn(2+)</name>
        <dbReference type="ChEBI" id="CHEBI:29105"/>
    </ligand>
</feature>
<feature type="binding site" evidence="4">
    <location>
        <position position="149"/>
    </location>
    <ligand>
        <name>Zn(2+)</name>
        <dbReference type="ChEBI" id="CHEBI:29105"/>
    </ligand>
</feature>
<feature type="sequence variant" id="VAR_050448" description="In dbSNP:rs2296466.">
    <original>E</original>
    <variation>G</variation>
    <location>
        <position position="46"/>
    </location>
</feature>
<feature type="sequence conflict" description="In Ref. 6; AAH18030." evidence="9" ref="6">
    <original>F</original>
    <variation>L</variation>
    <location>
        <position position="63"/>
    </location>
</feature>
<accession>Q9Y3D2</accession>
<accession>Q17R44</accession>
<accession>Q4G1C7</accession>
<accession>Q9Y5W6</accession>
<organism>
    <name type="scientific">Homo sapiens</name>
    <name type="common">Human</name>
    <dbReference type="NCBI Taxonomy" id="9606"/>
    <lineage>
        <taxon>Eukaryota</taxon>
        <taxon>Metazoa</taxon>
        <taxon>Chordata</taxon>
        <taxon>Craniata</taxon>
        <taxon>Vertebrata</taxon>
        <taxon>Euteleostomi</taxon>
        <taxon>Mammalia</taxon>
        <taxon>Eutheria</taxon>
        <taxon>Euarchontoglires</taxon>
        <taxon>Primates</taxon>
        <taxon>Haplorrhini</taxon>
        <taxon>Catarrhini</taxon>
        <taxon>Hominidae</taxon>
        <taxon>Homo</taxon>
    </lineage>
</organism>
<keyword id="KW-0479">Metal-binding</keyword>
<keyword id="KW-0496">Mitochondrion</keyword>
<keyword id="KW-0560">Oxidoreductase</keyword>
<keyword id="KW-1267">Proteomics identification</keyword>
<keyword id="KW-1185">Reference proteome</keyword>
<keyword id="KW-0809">Transit peptide</keyword>
<keyword id="KW-0862">Zinc</keyword>
<name>MSRB2_HUMAN</name>
<dbReference type="EC" id="1.8.4.12" evidence="2"/>
<dbReference type="EC" id="1.8.4.14" evidence="2"/>
<dbReference type="EMBL" id="AF122004">
    <property type="protein sequence ID" value="AAD38899.1"/>
    <property type="molecule type" value="mRNA"/>
</dbReference>
<dbReference type="EMBL" id="AF151889">
    <property type="protein sequence ID" value="AAD34126.1"/>
    <property type="status" value="ALT_FRAME"/>
    <property type="molecule type" value="mRNA"/>
</dbReference>
<dbReference type="EMBL" id="EF444983">
    <property type="protein sequence ID" value="ACA05998.1"/>
    <property type="molecule type" value="Genomic_DNA"/>
</dbReference>
<dbReference type="EMBL" id="AL139281">
    <property type="status" value="NOT_ANNOTATED_CDS"/>
    <property type="molecule type" value="Genomic_DNA"/>
</dbReference>
<dbReference type="EMBL" id="CH471072">
    <property type="protein sequence ID" value="EAW86135.1"/>
    <property type="molecule type" value="Genomic_DNA"/>
</dbReference>
<dbReference type="EMBL" id="BC018030">
    <property type="protein sequence ID" value="AAH18030.1"/>
    <property type="molecule type" value="mRNA"/>
</dbReference>
<dbReference type="EMBL" id="BC117471">
    <property type="protein sequence ID" value="AAI17472.1"/>
    <property type="molecule type" value="mRNA"/>
</dbReference>
<dbReference type="EMBL" id="BC130380">
    <property type="protein sequence ID" value="AAI30381.1"/>
    <property type="molecule type" value="mRNA"/>
</dbReference>
<dbReference type="CCDS" id="CCDS41495.1"/>
<dbReference type="RefSeq" id="NP_036360.3">
    <property type="nucleotide sequence ID" value="NM_012228.3"/>
</dbReference>
<dbReference type="SMR" id="Q9Y3D2"/>
<dbReference type="BioGRID" id="116583">
    <property type="interactions" value="61"/>
</dbReference>
<dbReference type="FunCoup" id="Q9Y3D2">
    <property type="interactions" value="856"/>
</dbReference>
<dbReference type="IntAct" id="Q9Y3D2">
    <property type="interactions" value="24"/>
</dbReference>
<dbReference type="STRING" id="9606.ENSP00000365693"/>
<dbReference type="ChEMBL" id="CHEMBL3509603"/>
<dbReference type="DrugBank" id="DB00134">
    <property type="generic name" value="Methionine"/>
</dbReference>
<dbReference type="iPTMnet" id="Q9Y3D2"/>
<dbReference type="PhosphoSitePlus" id="Q9Y3D2"/>
<dbReference type="SwissPalm" id="Q9Y3D2"/>
<dbReference type="BioMuta" id="MSRB2"/>
<dbReference type="DMDM" id="182676405"/>
<dbReference type="jPOST" id="Q9Y3D2"/>
<dbReference type="MassIVE" id="Q9Y3D2"/>
<dbReference type="PaxDb" id="9606-ENSP00000365693"/>
<dbReference type="PeptideAtlas" id="Q9Y3D2"/>
<dbReference type="ProteomicsDB" id="86019"/>
<dbReference type="Pumba" id="Q9Y3D2"/>
<dbReference type="Antibodypedia" id="25752">
    <property type="antibodies" value="179 antibodies from 28 providers"/>
</dbReference>
<dbReference type="DNASU" id="22921"/>
<dbReference type="Ensembl" id="ENST00000376510.8">
    <property type="protein sequence ID" value="ENSP00000365693.3"/>
    <property type="gene ID" value="ENSG00000148450.13"/>
</dbReference>
<dbReference type="GeneID" id="22921"/>
<dbReference type="KEGG" id="hsa:22921"/>
<dbReference type="MANE-Select" id="ENST00000376510.8">
    <property type="protein sequence ID" value="ENSP00000365693.3"/>
    <property type="RefSeq nucleotide sequence ID" value="NM_012228.4"/>
    <property type="RefSeq protein sequence ID" value="NP_036360.3"/>
</dbReference>
<dbReference type="UCSC" id="uc001iro.4">
    <property type="organism name" value="human"/>
</dbReference>
<dbReference type="AGR" id="HGNC:17061"/>
<dbReference type="CTD" id="22921"/>
<dbReference type="DisGeNET" id="22921"/>
<dbReference type="GeneCards" id="MSRB2"/>
<dbReference type="HGNC" id="HGNC:17061">
    <property type="gene designation" value="MSRB2"/>
</dbReference>
<dbReference type="HPA" id="ENSG00000148450">
    <property type="expression patterns" value="Low tissue specificity"/>
</dbReference>
<dbReference type="MIM" id="613782">
    <property type="type" value="gene"/>
</dbReference>
<dbReference type="neXtProt" id="NX_Q9Y3D2"/>
<dbReference type="OpenTargets" id="ENSG00000148450"/>
<dbReference type="PharmGKB" id="PA134979691"/>
<dbReference type="VEuPathDB" id="HostDB:ENSG00000148450"/>
<dbReference type="eggNOG" id="KOG0856">
    <property type="taxonomic scope" value="Eukaryota"/>
</dbReference>
<dbReference type="GeneTree" id="ENSGT00940000161673"/>
<dbReference type="HOGENOM" id="CLU_031040_8_2_1"/>
<dbReference type="InParanoid" id="Q9Y3D2"/>
<dbReference type="OMA" id="YDETTDW"/>
<dbReference type="OrthoDB" id="44061at2759"/>
<dbReference type="PAN-GO" id="Q9Y3D2">
    <property type="GO annotations" value="2 GO annotations based on evolutionary models"/>
</dbReference>
<dbReference type="PhylomeDB" id="Q9Y3D2"/>
<dbReference type="TreeFam" id="TF329147"/>
<dbReference type="BRENDA" id="1.8.4.12">
    <property type="organism ID" value="2681"/>
</dbReference>
<dbReference type="BRENDA" id="1.8.4.B3">
    <property type="organism ID" value="2681"/>
</dbReference>
<dbReference type="PathwayCommons" id="Q9Y3D2"/>
<dbReference type="Reactome" id="R-HSA-5676934">
    <property type="pathway name" value="Protein repair"/>
</dbReference>
<dbReference type="SignaLink" id="Q9Y3D2"/>
<dbReference type="BioGRID-ORCS" id="22921">
    <property type="hits" value="5 hits in 1152 CRISPR screens"/>
</dbReference>
<dbReference type="ChiTaRS" id="MSRB2">
    <property type="organism name" value="human"/>
</dbReference>
<dbReference type="GeneWiki" id="MSRB2"/>
<dbReference type="GenomeRNAi" id="22921"/>
<dbReference type="Pharos" id="Q9Y3D2">
    <property type="development level" value="Tbio"/>
</dbReference>
<dbReference type="PRO" id="PR:Q9Y3D2"/>
<dbReference type="Proteomes" id="UP000005640">
    <property type="component" value="Chromosome 10"/>
</dbReference>
<dbReference type="RNAct" id="Q9Y3D2">
    <property type="molecule type" value="protein"/>
</dbReference>
<dbReference type="Bgee" id="ENSG00000148450">
    <property type="expression patterns" value="Expressed in heart right ventricle and 209 other cell types or tissues"/>
</dbReference>
<dbReference type="ExpressionAtlas" id="Q9Y3D2">
    <property type="expression patterns" value="baseline and differential"/>
</dbReference>
<dbReference type="GO" id="GO:0005737">
    <property type="term" value="C:cytoplasm"/>
    <property type="evidence" value="ECO:0000318"/>
    <property type="project" value="GO_Central"/>
</dbReference>
<dbReference type="GO" id="GO:0005829">
    <property type="term" value="C:cytosol"/>
    <property type="evidence" value="ECO:0000304"/>
    <property type="project" value="Reactome"/>
</dbReference>
<dbReference type="GO" id="GO:0005739">
    <property type="term" value="C:mitochondrion"/>
    <property type="evidence" value="ECO:0006056"/>
    <property type="project" value="FlyBase"/>
</dbReference>
<dbReference type="GO" id="GO:0003779">
    <property type="term" value="F:actin binding"/>
    <property type="evidence" value="ECO:0000250"/>
    <property type="project" value="UniProtKB"/>
</dbReference>
<dbReference type="GO" id="GO:0033745">
    <property type="term" value="F:L-methionine-(R)-S-oxide reductase activity"/>
    <property type="evidence" value="ECO:0007669"/>
    <property type="project" value="UniProtKB-EC"/>
</dbReference>
<dbReference type="GO" id="GO:0033743">
    <property type="term" value="F:peptide-methionine (R)-S-oxide reductase activity"/>
    <property type="evidence" value="ECO:0000250"/>
    <property type="project" value="UniProtKB"/>
</dbReference>
<dbReference type="GO" id="GO:0008270">
    <property type="term" value="F:zinc ion binding"/>
    <property type="evidence" value="ECO:0000250"/>
    <property type="project" value="HGNC-UCL"/>
</dbReference>
<dbReference type="GO" id="GO:0030041">
    <property type="term" value="P:actin filament polymerization"/>
    <property type="evidence" value="ECO:0000250"/>
    <property type="project" value="UniProtKB"/>
</dbReference>
<dbReference type="GO" id="GO:0030091">
    <property type="term" value="P:protein repair"/>
    <property type="evidence" value="ECO:0000250"/>
    <property type="project" value="HGNC-UCL"/>
</dbReference>
<dbReference type="GO" id="GO:0006979">
    <property type="term" value="P:response to oxidative stress"/>
    <property type="evidence" value="ECO:0007669"/>
    <property type="project" value="InterPro"/>
</dbReference>
<dbReference type="FunFam" id="2.170.150.20:FF:000006">
    <property type="entry name" value="Peptide-methionine (R)-S-oxide reductase"/>
    <property type="match status" value="1"/>
</dbReference>
<dbReference type="Gene3D" id="2.170.150.20">
    <property type="entry name" value="Peptide methionine sulfoxide reductase"/>
    <property type="match status" value="1"/>
</dbReference>
<dbReference type="InterPro" id="IPR028427">
    <property type="entry name" value="Met_Sox_Rdtase_MsrB"/>
</dbReference>
<dbReference type="InterPro" id="IPR002579">
    <property type="entry name" value="Met_Sox_Rdtase_MsrB_dom"/>
</dbReference>
<dbReference type="InterPro" id="IPR011057">
    <property type="entry name" value="Mss4-like_sf"/>
</dbReference>
<dbReference type="NCBIfam" id="TIGR00357">
    <property type="entry name" value="peptide-methionine (R)-S-oxide reductase MsrB"/>
    <property type="match status" value="1"/>
</dbReference>
<dbReference type="PANTHER" id="PTHR10173">
    <property type="entry name" value="METHIONINE SULFOXIDE REDUCTASE"/>
    <property type="match status" value="1"/>
</dbReference>
<dbReference type="PANTHER" id="PTHR10173:SF37">
    <property type="entry name" value="METHIONINE-R-SULFOXIDE REDUCTASE B2, MITOCHONDRIAL"/>
    <property type="match status" value="1"/>
</dbReference>
<dbReference type="Pfam" id="PF01641">
    <property type="entry name" value="SelR"/>
    <property type="match status" value="1"/>
</dbReference>
<dbReference type="SUPFAM" id="SSF51316">
    <property type="entry name" value="Mss4-like"/>
    <property type="match status" value="1"/>
</dbReference>
<dbReference type="PROSITE" id="PS51790">
    <property type="entry name" value="MSRB"/>
    <property type="match status" value="1"/>
</dbReference>
<reference key="1">
    <citation type="journal article" date="1999" name="Gene">
        <title>Identification, expression and chromosome localization of a human gene encoding a novel protein with similarity to the pilB family of transcriptional factors (pilin) and to bacterial peptide methionine sulfoxide reductases.</title>
        <authorList>
            <person name="Huang W."/>
            <person name="Escribano J."/>
            <person name="Sarfarazi M."/>
            <person name="Coca-Prados M."/>
        </authorList>
    </citation>
    <scope>NUCLEOTIDE SEQUENCE [MRNA]</scope>
    <scope>TISSUE SPECIFICITY</scope>
    <source>
        <tissue>Ocular ciliary body</tissue>
    </source>
</reference>
<reference key="2">
    <citation type="journal article" date="2000" name="Genome Res.">
        <title>Identification of novel human genes evolutionarily conserved in Caenorhabditis elegans by comparative proteomics.</title>
        <authorList>
            <person name="Lai C.-H."/>
            <person name="Chou C.-Y."/>
            <person name="Ch'ang L.-Y."/>
            <person name="Liu C.-S."/>
            <person name="Lin W.-C."/>
        </authorList>
    </citation>
    <scope>NUCLEOTIDE SEQUENCE [LARGE SCALE MRNA]</scope>
</reference>
<reference key="3">
    <citation type="submission" date="2008-02" db="EMBL/GenBank/DDBJ databases">
        <authorList>
            <consortium name="NHLBI resequencing and genotyping service (RS&amp;G)"/>
        </authorList>
    </citation>
    <scope>NUCLEOTIDE SEQUENCE [GENOMIC DNA]</scope>
</reference>
<reference key="4">
    <citation type="journal article" date="2004" name="Nature">
        <title>The DNA sequence and comparative analysis of human chromosome 10.</title>
        <authorList>
            <person name="Deloukas P."/>
            <person name="Earthrowl M.E."/>
            <person name="Grafham D.V."/>
            <person name="Rubenfield M."/>
            <person name="French L."/>
            <person name="Steward C.A."/>
            <person name="Sims S.K."/>
            <person name="Jones M.C."/>
            <person name="Searle S."/>
            <person name="Scott C."/>
            <person name="Howe K."/>
            <person name="Hunt S.E."/>
            <person name="Andrews T.D."/>
            <person name="Gilbert J.G.R."/>
            <person name="Swarbreck D."/>
            <person name="Ashurst J.L."/>
            <person name="Taylor A."/>
            <person name="Battles J."/>
            <person name="Bird C.P."/>
            <person name="Ainscough R."/>
            <person name="Almeida J.P."/>
            <person name="Ashwell R.I.S."/>
            <person name="Ambrose K.D."/>
            <person name="Babbage A.K."/>
            <person name="Bagguley C.L."/>
            <person name="Bailey J."/>
            <person name="Banerjee R."/>
            <person name="Bates K."/>
            <person name="Beasley H."/>
            <person name="Bray-Allen S."/>
            <person name="Brown A.J."/>
            <person name="Brown J.Y."/>
            <person name="Burford D.C."/>
            <person name="Burrill W."/>
            <person name="Burton J."/>
            <person name="Cahill P."/>
            <person name="Camire D."/>
            <person name="Carter N.P."/>
            <person name="Chapman J.C."/>
            <person name="Clark S.Y."/>
            <person name="Clarke G."/>
            <person name="Clee C.M."/>
            <person name="Clegg S."/>
            <person name="Corby N."/>
            <person name="Coulson A."/>
            <person name="Dhami P."/>
            <person name="Dutta I."/>
            <person name="Dunn M."/>
            <person name="Faulkner L."/>
            <person name="Frankish A."/>
            <person name="Frankland J.A."/>
            <person name="Garner P."/>
            <person name="Garnett J."/>
            <person name="Gribble S."/>
            <person name="Griffiths C."/>
            <person name="Grocock R."/>
            <person name="Gustafson E."/>
            <person name="Hammond S."/>
            <person name="Harley J.L."/>
            <person name="Hart E."/>
            <person name="Heath P.D."/>
            <person name="Ho T.P."/>
            <person name="Hopkins B."/>
            <person name="Horne J."/>
            <person name="Howden P.J."/>
            <person name="Huckle E."/>
            <person name="Hynds C."/>
            <person name="Johnson C."/>
            <person name="Johnson D."/>
            <person name="Kana A."/>
            <person name="Kay M."/>
            <person name="Kimberley A.M."/>
            <person name="Kershaw J.K."/>
            <person name="Kokkinaki M."/>
            <person name="Laird G.K."/>
            <person name="Lawlor S."/>
            <person name="Lee H.M."/>
            <person name="Leongamornlert D.A."/>
            <person name="Laird G."/>
            <person name="Lloyd C."/>
            <person name="Lloyd D.M."/>
            <person name="Loveland J."/>
            <person name="Lovell J."/>
            <person name="McLaren S."/>
            <person name="McLay K.E."/>
            <person name="McMurray A."/>
            <person name="Mashreghi-Mohammadi M."/>
            <person name="Matthews L."/>
            <person name="Milne S."/>
            <person name="Nickerson T."/>
            <person name="Nguyen M."/>
            <person name="Overton-Larty E."/>
            <person name="Palmer S.A."/>
            <person name="Pearce A.V."/>
            <person name="Peck A.I."/>
            <person name="Pelan S."/>
            <person name="Phillimore B."/>
            <person name="Porter K."/>
            <person name="Rice C.M."/>
            <person name="Rogosin A."/>
            <person name="Ross M.T."/>
            <person name="Sarafidou T."/>
            <person name="Sehra H.K."/>
            <person name="Shownkeen R."/>
            <person name="Skuce C.D."/>
            <person name="Smith M."/>
            <person name="Standring L."/>
            <person name="Sycamore N."/>
            <person name="Tester J."/>
            <person name="Thorpe A."/>
            <person name="Torcasso W."/>
            <person name="Tracey A."/>
            <person name="Tromans A."/>
            <person name="Tsolas J."/>
            <person name="Wall M."/>
            <person name="Walsh J."/>
            <person name="Wang H."/>
            <person name="Weinstock K."/>
            <person name="West A.P."/>
            <person name="Willey D.L."/>
            <person name="Whitehead S.L."/>
            <person name="Wilming L."/>
            <person name="Wray P.W."/>
            <person name="Young L."/>
            <person name="Chen Y."/>
            <person name="Lovering R.C."/>
            <person name="Moschonas N.K."/>
            <person name="Siebert R."/>
            <person name="Fechtel K."/>
            <person name="Bentley D."/>
            <person name="Durbin R.M."/>
            <person name="Hubbard T."/>
            <person name="Doucette-Stamm L."/>
            <person name="Beck S."/>
            <person name="Smith D.R."/>
            <person name="Rogers J."/>
        </authorList>
    </citation>
    <scope>NUCLEOTIDE SEQUENCE [LARGE SCALE GENOMIC DNA]</scope>
    <source>
        <tissue>Brain</tissue>
    </source>
</reference>
<reference key="5">
    <citation type="submission" date="2005-09" db="EMBL/GenBank/DDBJ databases">
        <authorList>
            <person name="Mural R.J."/>
            <person name="Istrail S."/>
            <person name="Sutton G.G."/>
            <person name="Florea L."/>
            <person name="Halpern A.L."/>
            <person name="Mobarry C.M."/>
            <person name="Lippert R."/>
            <person name="Walenz B."/>
            <person name="Shatkay H."/>
            <person name="Dew I."/>
            <person name="Miller J.R."/>
            <person name="Flanigan M.J."/>
            <person name="Edwards N.J."/>
            <person name="Bolanos R."/>
            <person name="Fasulo D."/>
            <person name="Halldorsson B.V."/>
            <person name="Hannenhalli S."/>
            <person name="Turner R."/>
            <person name="Yooseph S."/>
            <person name="Lu F."/>
            <person name="Nusskern D.R."/>
            <person name="Shue B.C."/>
            <person name="Zheng X.H."/>
            <person name="Zhong F."/>
            <person name="Delcher A.L."/>
            <person name="Huson D.H."/>
            <person name="Kravitz S.A."/>
            <person name="Mouchard L."/>
            <person name="Reinert K."/>
            <person name="Remington K.A."/>
            <person name="Clark A.G."/>
            <person name="Waterman M.S."/>
            <person name="Eichler E.E."/>
            <person name="Adams M.D."/>
            <person name="Hunkapiller M.W."/>
            <person name="Myers E.W."/>
            <person name="Venter J.C."/>
        </authorList>
    </citation>
    <scope>NUCLEOTIDE SEQUENCE [LARGE SCALE GENOMIC DNA]</scope>
    <source>
        <tissue>Brain</tissue>
    </source>
</reference>
<reference key="6">
    <citation type="journal article" date="2004" name="Genome Res.">
        <title>The status, quality, and expansion of the NIH full-length cDNA project: the Mammalian Gene Collection (MGC).</title>
        <authorList>
            <consortium name="The MGC Project Team"/>
        </authorList>
    </citation>
    <scope>NUCLEOTIDE SEQUENCE [LARGE SCALE MRNA]</scope>
    <source>
        <tissue>Brain</tissue>
    </source>
</reference>
<reference key="7">
    <citation type="journal article" date="2005" name="Invest. Ophthalmol. Vis. Sci.">
        <title>Methionine sulfoxide reductases B1, B2, and B3 are present in the human lens and confer oxidative stress resistance to lens cells.</title>
        <authorList>
            <person name="Marchetti M.A."/>
            <person name="Pizarro G.O."/>
            <person name="Sagher D."/>
            <person name="Deamicis C."/>
            <person name="Brot N."/>
            <person name="Hejtmancik J.F."/>
            <person name="Weissbach H."/>
            <person name="Kantorow M."/>
        </authorList>
    </citation>
    <scope>TISSUE SPECIFICITY</scope>
</reference>
<reference key="8">
    <citation type="journal article" date="2008" name="J. Biol. Chem.">
        <title>Overexpression of mitochondrial methionine sulfoxide reductase B2 protects leukemia cells from oxidative stress-induced cell death and protein damage.</title>
        <authorList>
            <person name="Cabreiro F."/>
            <person name="Picot C.R."/>
            <person name="Perichon M."/>
            <person name="Castel J."/>
            <person name="Friguet B."/>
            <person name="Petropoulos I."/>
        </authorList>
    </citation>
    <scope>FUNCTION</scope>
    <scope>SUBCELLULAR LOCATION</scope>
</reference>
<reference key="9">
    <citation type="journal article" date="2014" name="Cell. Mol. Neurobiol.">
        <title>Identification of the mitochondrial MSRB2 as a binding partner of LG72.</title>
        <authorList>
            <person name="Otte D.M."/>
            <person name="Rasko T."/>
            <person name="Wang M."/>
            <person name="Dreiseidler M."/>
            <person name="Drews E."/>
            <person name="Schrage H."/>
            <person name="Wojtalla A."/>
            <person name="Hoehfeld J."/>
            <person name="Wanker E."/>
            <person name="Zimmer A."/>
        </authorList>
    </citation>
    <scope>INTERACTION WITH DAOA</scope>
    <scope>SUBCELLULAR LOCATION</scope>
</reference>
<reference key="10">
    <citation type="journal article" date="2014" name="J. Proteomics">
        <title>An enzyme assisted RP-RPLC approach for in-depth analysis of human liver phosphoproteome.</title>
        <authorList>
            <person name="Bian Y."/>
            <person name="Song C."/>
            <person name="Cheng K."/>
            <person name="Dong M."/>
            <person name="Wang F."/>
            <person name="Huang J."/>
            <person name="Sun D."/>
            <person name="Wang L."/>
            <person name="Ye M."/>
            <person name="Zou H."/>
        </authorList>
    </citation>
    <scope>IDENTIFICATION BY MASS SPECTROMETRY [LARGE SCALE ANALYSIS]</scope>
    <source>
        <tissue>Liver</tissue>
    </source>
</reference>
<protein>
    <recommendedName>
        <fullName>Methionine-R-sulfoxide reductase B2, mitochondrial</fullName>
        <shortName>MsrB2</shortName>
        <ecNumber evidence="2">1.8.4.12</ecNumber>
        <ecNumber evidence="2">1.8.4.14</ecNumber>
    </recommendedName>
</protein>
<evidence type="ECO:0000250" key="1"/>
<evidence type="ECO:0000250" key="2">
    <source>
        <dbReference type="UniProtKB" id="Q9JLC3"/>
    </source>
</evidence>
<evidence type="ECO:0000255" key="3"/>
<evidence type="ECO:0000255" key="4">
    <source>
        <dbReference type="PROSITE-ProRule" id="PRU01126"/>
    </source>
</evidence>
<evidence type="ECO:0000269" key="5">
    <source>
    </source>
</evidence>
<evidence type="ECO:0000269" key="6">
    <source>
    </source>
</evidence>
<evidence type="ECO:0000269" key="7">
    <source>
    </source>
</evidence>
<evidence type="ECO:0000269" key="8">
    <source>
    </source>
</evidence>
<evidence type="ECO:0000305" key="9"/>
<gene>
    <name type="primary">MSRB2</name>
    <name type="synonym">CBS-1</name>
    <name type="synonym">MSRB</name>
    <name type="ORF">CGI-131</name>
</gene>
<proteinExistence type="evidence at protein level"/>
<comment type="function">
    <text evidence="7">Methionine-sulfoxide reductase that specifically reduces methionine (R)-sulfoxide back to methionine. While in many cases, methionine oxidation is the result of random oxidation following oxidative stress, methionine oxidation is also a post-translational modification that takes place on specific residue. Upon oxidative stress, may play a role in the preservation of mitochondrial integrity by decreasing the intracellular reactive oxygen species build-up through its scavenging role, hence contributing to cell survival and protein maintenance.</text>
</comment>
<comment type="catalytic activity">
    <reaction evidence="2">
        <text>L-methionyl-[protein] + [thioredoxin]-disulfide + H2O = L-methionyl-(R)-S-oxide-[protein] + [thioredoxin]-dithiol</text>
        <dbReference type="Rhea" id="RHEA:24164"/>
        <dbReference type="Rhea" id="RHEA-COMP:10698"/>
        <dbReference type="Rhea" id="RHEA-COMP:10700"/>
        <dbReference type="Rhea" id="RHEA-COMP:12313"/>
        <dbReference type="Rhea" id="RHEA-COMP:12314"/>
        <dbReference type="ChEBI" id="CHEBI:15377"/>
        <dbReference type="ChEBI" id="CHEBI:16044"/>
        <dbReference type="ChEBI" id="CHEBI:29950"/>
        <dbReference type="ChEBI" id="CHEBI:45764"/>
        <dbReference type="ChEBI" id="CHEBI:50058"/>
        <dbReference type="EC" id="1.8.4.12"/>
    </reaction>
</comment>
<comment type="catalytic activity">
    <reaction evidence="2">
        <text>[thioredoxin]-disulfide + L-methionine + H2O = L-methionine (R)-S-oxide + [thioredoxin]-dithiol</text>
        <dbReference type="Rhea" id="RHEA:21260"/>
        <dbReference type="Rhea" id="RHEA-COMP:10698"/>
        <dbReference type="Rhea" id="RHEA-COMP:10700"/>
        <dbReference type="ChEBI" id="CHEBI:15377"/>
        <dbReference type="ChEBI" id="CHEBI:29950"/>
        <dbReference type="ChEBI" id="CHEBI:50058"/>
        <dbReference type="ChEBI" id="CHEBI:57844"/>
        <dbReference type="ChEBI" id="CHEBI:58773"/>
        <dbReference type="EC" id="1.8.4.14"/>
    </reaction>
</comment>
<comment type="cofactor">
    <cofactor evidence="1">
        <name>Zn(2+)</name>
        <dbReference type="ChEBI" id="CHEBI:29105"/>
    </cofactor>
    <text evidence="1">Binds 1 zinc ion per subunit.</text>
</comment>
<comment type="subunit">
    <text evidence="8">Interacts with DAOA; the interaction is direct.</text>
</comment>
<comment type="interaction">
    <interactant intactId="EBI-9092052">
        <id>Q9Y3D2</id>
    </interactant>
    <interactant intactId="EBI-21535880">
        <id>Q92870-2</id>
        <label>APBB2</label>
    </interactant>
    <organismsDiffer>false</organismsDiffer>
    <experiments>3</experiments>
</comment>
<comment type="interaction">
    <interactant intactId="EBI-9092052">
        <id>Q9Y3D2</id>
    </interactant>
    <interactant intactId="EBI-1222467">
        <id>P02649</id>
        <label>APOE</label>
    </interactant>
    <organismsDiffer>false</organismsDiffer>
    <experiments>3</experiments>
</comment>
<comment type="interaction">
    <interactant intactId="EBI-9092052">
        <id>Q9Y3D2</id>
    </interactant>
    <interactant intactId="EBI-2807872">
        <id>Q7Z3D6</id>
        <label>DGLUCY</label>
    </interactant>
    <organismsDiffer>false</organismsDiffer>
    <experiments>3</experiments>
</comment>
<comment type="interaction">
    <interactant intactId="EBI-9092052">
        <id>Q9Y3D2</id>
    </interactant>
    <interactant intactId="EBI-21603100">
        <id>P26378-2</id>
        <label>ELAVL4</label>
    </interactant>
    <organismsDiffer>false</organismsDiffer>
    <experiments>3</experiments>
</comment>
<comment type="interaction">
    <interactant intactId="EBI-9092052">
        <id>Q9Y3D2</id>
    </interactant>
    <interactant intactId="EBI-744302">
        <id>P14136</id>
        <label>GFAP</label>
    </interactant>
    <organismsDiffer>false</organismsDiffer>
    <experiments>3</experiments>
</comment>
<comment type="interaction">
    <interactant intactId="EBI-9092052">
        <id>Q9Y3D2</id>
    </interactant>
    <interactant intactId="EBI-466029">
        <id>P42858</id>
        <label>HTT</label>
    </interactant>
    <organismsDiffer>false</organismsDiffer>
    <experiments>12</experiments>
</comment>
<comment type="interaction">
    <interactant intactId="EBI-9092052">
        <id>Q9Y3D2</id>
    </interactant>
    <interactant intactId="EBI-1055254">
        <id>Q8WXH2</id>
        <label>JPH3</label>
    </interactant>
    <organismsDiffer>false</organismsDiffer>
    <experiments>3</experiments>
</comment>
<comment type="interaction">
    <interactant intactId="EBI-9092052">
        <id>Q9Y3D2</id>
    </interactant>
    <interactant intactId="EBI-716486">
        <id>Q92597</id>
        <label>NDRG1</label>
    </interactant>
    <organismsDiffer>false</organismsDiffer>
    <experiments>3</experiments>
</comment>
<comment type="interaction">
    <interactant intactId="EBI-9092052">
        <id>Q9Y3D2</id>
    </interactant>
    <interactant intactId="EBI-713665">
        <id>P19404</id>
        <label>NDUFV2</label>
    </interactant>
    <organismsDiffer>false</organismsDiffer>
    <experiments>3</experiments>
</comment>
<comment type="interaction">
    <interactant intactId="EBI-9092052">
        <id>Q9Y3D2</id>
    </interactant>
    <interactant intactId="EBI-752057">
        <id>Q7Z412</id>
        <label>PEX26</label>
    </interactant>
    <organismsDiffer>false</organismsDiffer>
    <experiments>3</experiments>
</comment>
<comment type="interaction">
    <interactant intactId="EBI-9092052">
        <id>Q9Y3D2</id>
    </interactant>
    <interactant intactId="EBI-50433196">
        <id>A0A6Q8PF08</id>
        <label>PMP22</label>
    </interactant>
    <organismsDiffer>false</organismsDiffer>
    <experiments>3</experiments>
</comment>
<comment type="interaction">
    <interactant intactId="EBI-9092052">
        <id>Q9Y3D2</id>
    </interactant>
    <interactant intactId="EBI-985879">
        <id>P37840</id>
        <label>SNCA</label>
    </interactant>
    <organismsDiffer>false</organismsDiffer>
    <experiments>3</experiments>
</comment>
<comment type="interaction">
    <interactant intactId="EBI-9092052">
        <id>Q9Y3D2</id>
    </interactant>
    <interactant intactId="EBI-355744">
        <id>Q12933</id>
        <label>TRAF2</label>
    </interactant>
    <organismsDiffer>false</organismsDiffer>
    <experiments>3</experiments>
</comment>
<comment type="subcellular location">
    <subcellularLocation>
        <location evidence="7 8">Mitochondrion</location>
    </subcellularLocation>
</comment>
<comment type="tissue specificity">
    <text evidence="5 6">Ubiquitous. Detected in retina, ocular ciliary body, skeletal muscle, heart, colon, bone marrow, cerebellum, small intestine, fetal brain, fetal liver, kidney, spinal cord, lung, placenta and prostate.</text>
</comment>
<comment type="similarity">
    <text evidence="9">Belongs to the MsrB Met sulfoxide reductase family.</text>
</comment>
<comment type="sequence caution" evidence="9">
    <conflict type="frameshift">
        <sequence resource="EMBL-CDS" id="AAD34126"/>
    </conflict>
</comment>